<organism>
    <name type="scientific">Pongo abelii</name>
    <name type="common">Sumatran orangutan</name>
    <name type="synonym">Pongo pygmaeus abelii</name>
    <dbReference type="NCBI Taxonomy" id="9601"/>
    <lineage>
        <taxon>Eukaryota</taxon>
        <taxon>Metazoa</taxon>
        <taxon>Chordata</taxon>
        <taxon>Craniata</taxon>
        <taxon>Vertebrata</taxon>
        <taxon>Euteleostomi</taxon>
        <taxon>Mammalia</taxon>
        <taxon>Eutheria</taxon>
        <taxon>Euarchontoglires</taxon>
        <taxon>Primates</taxon>
        <taxon>Haplorrhini</taxon>
        <taxon>Catarrhini</taxon>
        <taxon>Hominidae</taxon>
        <taxon>Pongo</taxon>
    </lineage>
</organism>
<gene>
    <name type="primary">SENP1</name>
</gene>
<dbReference type="EC" id="3.4.22.-"/>
<dbReference type="EMBL" id="CR858740">
    <property type="protein sequence ID" value="CAH90949.1"/>
    <property type="molecule type" value="mRNA"/>
</dbReference>
<dbReference type="RefSeq" id="NP_001129011.1">
    <property type="nucleotide sequence ID" value="NM_001135539.1"/>
</dbReference>
<dbReference type="RefSeq" id="XP_009245938.1">
    <property type="nucleotide sequence ID" value="XM_009247663.1"/>
</dbReference>
<dbReference type="BMRB" id="Q5RBB1"/>
<dbReference type="SMR" id="Q5RBB1"/>
<dbReference type="FunCoup" id="Q5RBB1">
    <property type="interactions" value="3226"/>
</dbReference>
<dbReference type="STRING" id="9601.ENSPPYP00000005082"/>
<dbReference type="MEROPS" id="C48.002"/>
<dbReference type="Ensembl" id="ENSPPYT00000005282.2">
    <property type="protein sequence ID" value="ENSPPYP00000005082.2"/>
    <property type="gene ID" value="ENSPPYG00000004452.2"/>
</dbReference>
<dbReference type="GeneID" id="100190851"/>
<dbReference type="KEGG" id="pon:100190851"/>
<dbReference type="CTD" id="29843"/>
<dbReference type="eggNOG" id="KOG0778">
    <property type="taxonomic scope" value="Eukaryota"/>
</dbReference>
<dbReference type="GeneTree" id="ENSGT00940000155489"/>
<dbReference type="InParanoid" id="Q5RBB1"/>
<dbReference type="OrthoDB" id="1939479at2759"/>
<dbReference type="Proteomes" id="UP000001595">
    <property type="component" value="Chromosome 12"/>
</dbReference>
<dbReference type="GO" id="GO:0005737">
    <property type="term" value="C:cytoplasm"/>
    <property type="evidence" value="ECO:0007669"/>
    <property type="project" value="UniProtKB-SubCell"/>
</dbReference>
<dbReference type="GO" id="GO:0005634">
    <property type="term" value="C:nucleus"/>
    <property type="evidence" value="ECO:0007669"/>
    <property type="project" value="UniProtKB-SubCell"/>
</dbReference>
<dbReference type="GO" id="GO:0016929">
    <property type="term" value="F:deSUMOylase activity"/>
    <property type="evidence" value="ECO:0000250"/>
    <property type="project" value="UniProtKB"/>
</dbReference>
<dbReference type="GO" id="GO:0070139">
    <property type="term" value="F:SUMO-specific endopeptidase activity"/>
    <property type="evidence" value="ECO:0000250"/>
    <property type="project" value="UniProtKB"/>
</dbReference>
<dbReference type="GO" id="GO:0016926">
    <property type="term" value="P:protein desumoylation"/>
    <property type="evidence" value="ECO:0000250"/>
    <property type="project" value="UniProtKB"/>
</dbReference>
<dbReference type="GO" id="GO:0006508">
    <property type="term" value="P:proteolysis"/>
    <property type="evidence" value="ECO:0007669"/>
    <property type="project" value="UniProtKB-KW"/>
</dbReference>
<dbReference type="FunFam" id="3.40.395.10:FF:000001">
    <property type="entry name" value="Sentrin-specific protease 1"/>
    <property type="match status" value="1"/>
</dbReference>
<dbReference type="Gene3D" id="3.40.395.10">
    <property type="entry name" value="Adenoviral Proteinase, Chain A"/>
    <property type="match status" value="1"/>
</dbReference>
<dbReference type="InterPro" id="IPR038765">
    <property type="entry name" value="Papain-like_cys_pep_sf"/>
</dbReference>
<dbReference type="InterPro" id="IPR003653">
    <property type="entry name" value="Peptidase_C48_C"/>
</dbReference>
<dbReference type="PANTHER" id="PTHR12606:SF30">
    <property type="entry name" value="SENTRIN-SPECIFIC PROTEASE 1"/>
    <property type="match status" value="1"/>
</dbReference>
<dbReference type="PANTHER" id="PTHR12606">
    <property type="entry name" value="SENTRIN/SUMO-SPECIFIC PROTEASE"/>
    <property type="match status" value="1"/>
</dbReference>
<dbReference type="Pfam" id="PF02902">
    <property type="entry name" value="Peptidase_C48"/>
    <property type="match status" value="1"/>
</dbReference>
<dbReference type="SUPFAM" id="SSF54001">
    <property type="entry name" value="Cysteine proteinases"/>
    <property type="match status" value="1"/>
</dbReference>
<dbReference type="PROSITE" id="PS50600">
    <property type="entry name" value="ULP_PROTEASE"/>
    <property type="match status" value="1"/>
</dbReference>
<reference key="1">
    <citation type="submission" date="2004-11" db="EMBL/GenBank/DDBJ databases">
        <authorList>
            <consortium name="The German cDNA consortium"/>
        </authorList>
    </citation>
    <scope>NUCLEOTIDE SEQUENCE [LARGE SCALE MRNA]</scope>
    <source>
        <tissue>Brain cortex</tissue>
    </source>
</reference>
<comment type="function">
    <text evidence="2">Protease that catalyzes two essential functions in the SUMO pathway. The first is the hydrolysis of an alpha-linked peptide bond at the C-terminal end of the small ubiquitin-like modifier (SUMO) propeptides, SUMO1, SUMO2 and SUMO3 leading to the mature form of the proteins. The second is the deconjugation of SUMO1, SUMO2 and SUMO3 from targeted proteins, by cleaving an epsilon-linked peptide bond between the C-terminal glycine of the mature SUMO and the lysine epsilon-amino group of the target protein. Deconjugates SUMO1 from HIPK2. Deconjugates SUMO1 from HDAC1 and BHLHE40/DEC1, which decreases its transcriptional repression activity. Deconjugates SUMO1 from CLOCK, which decreases its transcriptional activation activity. Deconjugates SUMO2 from MTA1. Inhibits N(6)-methyladenosine (m6A) RNA methylation by mediating SUMO1 deconjugation from METTL3 and ALKBH5: METTL3 inhibits the m6A RNA methyltransferase activity, while ALKBH5 desumoylation promotes m6A demethylation. Desumoylates CCAR2 which decreases its interaction with SIRT1. Deconjugates SUMO1 from GPS2.</text>
</comment>
<comment type="subunit">
    <text evidence="2">Interacts with RBM33; promoting ALKBH5 desumoylation and subsequent activation.</text>
</comment>
<comment type="subcellular location">
    <subcellularLocation>
        <location evidence="2">Nucleus</location>
    </subcellularLocation>
    <subcellularLocation>
        <location evidence="2">Cytoplasm</location>
    </subcellularLocation>
    <text evidence="2">Shuttles between cytoplasm and nucleus.</text>
</comment>
<comment type="similarity">
    <text evidence="5">Belongs to the peptidase C48 family.</text>
</comment>
<protein>
    <recommendedName>
        <fullName>Sentrin-specific protease 1</fullName>
        <ecNumber>3.4.22.-</ecNumber>
    </recommendedName>
    <alternativeName>
        <fullName>Sentrin/SUMO-specific protease SENP1</fullName>
    </alternativeName>
</protein>
<sequence length="645" mass="73604">MDDIADRMRMDAGEVTLVNHNSVFKTHLLPQTGFPEDQLSLSDQQILSSRQGYLDRSFTCSTRSAAYNPSYYSDNPSSDSFLGSGDLRTFGQSANGQWRNSTPSSSSSLQKSRNSRSLYLETRKTSSGLSNIFAGKSNHHCHVSAYEKSFPIKPVPSPSWSGSCRRSLLSPKKTQRRHVSTAEETVQEEEREIYRQLLQMVTGKQFTIAKPTTHFPLHLSRCLSSSKNTLKDSLFKNGNSCASQIIGSDTSSSGSASILTNQEQLSHSVYSLSSYTPDVVAFGSKDSGTLHHPHHHHSVPHQPDNLAASNTQSEGSDSVILLKVKDSQTPTPSSTFFQAELWIKELTSVYDSRARERLRQIEEQKALALQLQNQRLQEREHSVHDSVELHLRVPLEKEIPVTVAQETQKKGHKLTDSEDEFPEITEEMEKEIKNVFRNGNQDEVLSEAFRLTITRKDIQTLNHLNWLNDEIINFYMNMLMERSKEKGLPSVHAFNTFFFTKLKTAGYQAVKRWTKKVDVFSVDILLVPIHLGVHWCLAVVDFRKKNITYYDSMGGINNEACRILLQYLKQESIDKKRKEFDTNGWQLFSKKSQEIPQQMNGSDCGMFACKYADCITKDRPINFTQQHMPYFRKRMVWEILHRKLL</sequence>
<keyword id="KW-0963">Cytoplasm</keyword>
<keyword id="KW-0378">Hydrolase</keyword>
<keyword id="KW-0539">Nucleus</keyword>
<keyword id="KW-0597">Phosphoprotein</keyword>
<keyword id="KW-0645">Protease</keyword>
<keyword id="KW-1185">Reference proteome</keyword>
<keyword id="KW-0788">Thiol protease</keyword>
<keyword id="KW-0833">Ubl conjugation pathway</keyword>
<feature type="chain" id="PRO_0000267605" description="Sentrin-specific protease 1">
    <location>
        <begin position="1"/>
        <end position="645"/>
    </location>
</feature>
<feature type="region of interest" description="Interaction with CCAR2" evidence="2">
    <location>
        <begin position="1"/>
        <end position="200"/>
    </location>
</feature>
<feature type="region of interest" description="Disordered" evidence="4">
    <location>
        <begin position="92"/>
        <end position="117"/>
    </location>
</feature>
<feature type="region of interest" description="Disordered" evidence="4">
    <location>
        <begin position="285"/>
        <end position="313"/>
    </location>
</feature>
<feature type="region of interest" description="Protease" evidence="1">
    <location>
        <begin position="451"/>
        <end position="615"/>
    </location>
</feature>
<feature type="region of interest" description="Protease" evidence="2">
    <location>
        <begin position="451"/>
        <end position="614"/>
    </location>
</feature>
<feature type="short sequence motif" description="Nuclear localization signal" evidence="2">
    <location>
        <begin position="171"/>
        <end position="177"/>
    </location>
</feature>
<feature type="short sequence motif" description="Nuclear localization signal" evidence="3">
    <location>
        <begin position="575"/>
        <end position="578"/>
    </location>
</feature>
<feature type="short sequence motif" description="Nuclear localization signal" evidence="3">
    <location>
        <begin position="629"/>
        <end position="635"/>
    </location>
</feature>
<feature type="short sequence motif" description="Nuclear export signal" evidence="2">
    <location>
        <begin position="636"/>
        <end position="645"/>
    </location>
</feature>
<feature type="compositionally biased region" description="Low complexity" evidence="4">
    <location>
        <begin position="99"/>
        <end position="117"/>
    </location>
</feature>
<feature type="active site" evidence="2">
    <location>
        <position position="534"/>
    </location>
</feature>
<feature type="active site" evidence="2">
    <location>
        <position position="551"/>
    </location>
</feature>
<feature type="active site" description="Nucleophile" evidence="2">
    <location>
        <position position="604"/>
    </location>
</feature>
<feature type="modified residue" description="Phosphoserine" evidence="2">
    <location>
        <position position="57"/>
    </location>
</feature>
<feature type="modified residue" description="Phosphoserine" evidence="2">
    <location>
        <position position="117"/>
    </location>
</feature>
<feature type="modified residue" description="Phosphoserine" evidence="2">
    <location>
        <position position="157"/>
    </location>
</feature>
<name>SENP1_PONAB</name>
<evidence type="ECO:0000250" key="1"/>
<evidence type="ECO:0000250" key="2">
    <source>
        <dbReference type="UniProtKB" id="Q9P0U3"/>
    </source>
</evidence>
<evidence type="ECO:0000255" key="3"/>
<evidence type="ECO:0000256" key="4">
    <source>
        <dbReference type="SAM" id="MobiDB-lite"/>
    </source>
</evidence>
<evidence type="ECO:0000305" key="5"/>
<proteinExistence type="evidence at transcript level"/>
<accession>Q5RBB1</accession>